<sequence length="234" mass="26331">MEFSPLLQRATLIQRYKRFLADVITPDGRELTLHCPNTGAMTGCATRGDTVWYSTSDNTKRKYPHTWELTQSQSGAFICVNTLWANRLTKEAILNESISELSGYSSLKSEVKYGAERSRIDFMLQADSRPDCYIEVKSVTLAENEQGYFPDAVTERGQKHLRELMNVAAEGQRAVIFFAVLHSAITRFSPARHIDEKYAQLLSEAQQRGVEILAYKAEISAEGMALKKSLPVTL</sequence>
<gene>
    <name evidence="1" type="primary">sfsA</name>
    <name type="ordered locus">SBO_0135</name>
</gene>
<protein>
    <recommendedName>
        <fullName evidence="1">Sugar fermentation stimulation protein A</fullName>
    </recommendedName>
</protein>
<comment type="function">
    <text evidence="1">Binds to DNA non-specifically. Could be a regulatory factor involved in maltose metabolism.</text>
</comment>
<comment type="similarity">
    <text evidence="1">Belongs to the SfsA family.</text>
</comment>
<feature type="chain" id="PRO_1000008032" description="Sugar fermentation stimulation protein A">
    <location>
        <begin position="1"/>
        <end position="234"/>
    </location>
</feature>
<feature type="DNA-binding region" description="H-T-H motif" evidence="1">
    <location>
        <begin position="201"/>
        <end position="220"/>
    </location>
</feature>
<reference key="1">
    <citation type="journal article" date="2005" name="Nucleic Acids Res.">
        <title>Genome dynamics and diversity of Shigella species, the etiologic agents of bacillary dysentery.</title>
        <authorList>
            <person name="Yang F."/>
            <person name="Yang J."/>
            <person name="Zhang X."/>
            <person name="Chen L."/>
            <person name="Jiang Y."/>
            <person name="Yan Y."/>
            <person name="Tang X."/>
            <person name="Wang J."/>
            <person name="Xiong Z."/>
            <person name="Dong J."/>
            <person name="Xue Y."/>
            <person name="Zhu Y."/>
            <person name="Xu X."/>
            <person name="Sun L."/>
            <person name="Chen S."/>
            <person name="Nie H."/>
            <person name="Peng J."/>
            <person name="Xu J."/>
            <person name="Wang Y."/>
            <person name="Yuan Z."/>
            <person name="Wen Y."/>
            <person name="Yao Z."/>
            <person name="Shen Y."/>
            <person name="Qiang B."/>
            <person name="Hou Y."/>
            <person name="Yu J."/>
            <person name="Jin Q."/>
        </authorList>
    </citation>
    <scope>NUCLEOTIDE SEQUENCE [LARGE SCALE GENOMIC DNA]</scope>
    <source>
        <strain>Sb227</strain>
    </source>
</reference>
<dbReference type="EMBL" id="CP000036">
    <property type="protein sequence ID" value="ABB64865.1"/>
    <property type="molecule type" value="Genomic_DNA"/>
</dbReference>
<dbReference type="RefSeq" id="WP_000396019.1">
    <property type="nucleotide sequence ID" value="NC_007613.1"/>
</dbReference>
<dbReference type="SMR" id="Q325Z3"/>
<dbReference type="KEGG" id="sbo:SBO_0135"/>
<dbReference type="HOGENOM" id="CLU_052299_2_0_6"/>
<dbReference type="Proteomes" id="UP000007067">
    <property type="component" value="Chromosome"/>
</dbReference>
<dbReference type="GO" id="GO:0003677">
    <property type="term" value="F:DNA binding"/>
    <property type="evidence" value="ECO:0007669"/>
    <property type="project" value="UniProtKB-KW"/>
</dbReference>
<dbReference type="CDD" id="cd22359">
    <property type="entry name" value="SfsA-like_bacterial"/>
    <property type="match status" value="1"/>
</dbReference>
<dbReference type="FunFam" id="2.40.50.580:FF:000001">
    <property type="entry name" value="Sugar fermentation stimulation protein A"/>
    <property type="match status" value="1"/>
</dbReference>
<dbReference type="FunFam" id="3.40.1350.60:FF:000001">
    <property type="entry name" value="Sugar fermentation stimulation protein A"/>
    <property type="match status" value="1"/>
</dbReference>
<dbReference type="Gene3D" id="2.40.50.580">
    <property type="match status" value="1"/>
</dbReference>
<dbReference type="Gene3D" id="3.40.1350.60">
    <property type="match status" value="1"/>
</dbReference>
<dbReference type="HAMAP" id="MF_00095">
    <property type="entry name" value="SfsA"/>
    <property type="match status" value="1"/>
</dbReference>
<dbReference type="InterPro" id="IPR005224">
    <property type="entry name" value="SfsA"/>
</dbReference>
<dbReference type="InterPro" id="IPR040452">
    <property type="entry name" value="SfsA_C"/>
</dbReference>
<dbReference type="InterPro" id="IPR041465">
    <property type="entry name" value="SfsA_N"/>
</dbReference>
<dbReference type="NCBIfam" id="TIGR00230">
    <property type="entry name" value="sfsA"/>
    <property type="match status" value="1"/>
</dbReference>
<dbReference type="PANTHER" id="PTHR30545">
    <property type="entry name" value="SUGAR FERMENTATION STIMULATION PROTEIN A"/>
    <property type="match status" value="1"/>
</dbReference>
<dbReference type="PANTHER" id="PTHR30545:SF2">
    <property type="entry name" value="SUGAR FERMENTATION STIMULATION PROTEIN A"/>
    <property type="match status" value="1"/>
</dbReference>
<dbReference type="Pfam" id="PF03749">
    <property type="entry name" value="SfsA"/>
    <property type="match status" value="1"/>
</dbReference>
<dbReference type="Pfam" id="PF17746">
    <property type="entry name" value="SfsA_N"/>
    <property type="match status" value="1"/>
</dbReference>
<organism>
    <name type="scientific">Shigella boydii serotype 4 (strain Sb227)</name>
    <dbReference type="NCBI Taxonomy" id="300268"/>
    <lineage>
        <taxon>Bacteria</taxon>
        <taxon>Pseudomonadati</taxon>
        <taxon>Pseudomonadota</taxon>
        <taxon>Gammaproteobacteria</taxon>
        <taxon>Enterobacterales</taxon>
        <taxon>Enterobacteriaceae</taxon>
        <taxon>Shigella</taxon>
    </lineage>
</organism>
<keyword id="KW-0238">DNA-binding</keyword>
<proteinExistence type="inferred from homology"/>
<accession>Q325Z3</accession>
<evidence type="ECO:0000255" key="1">
    <source>
        <dbReference type="HAMAP-Rule" id="MF_00095"/>
    </source>
</evidence>
<name>SFSA_SHIBS</name>